<feature type="chain" id="PRO_0000411389" description="Thymidylate kinase">
    <location>
        <begin position="1"/>
        <end position="211"/>
    </location>
</feature>
<feature type="binding site" evidence="1">
    <location>
        <begin position="11"/>
        <end position="18"/>
    </location>
    <ligand>
        <name>ATP</name>
        <dbReference type="ChEBI" id="CHEBI:30616"/>
    </ligand>
</feature>
<name>KTHY_STRPQ</name>
<sequence>MITGKLITVEGPDGAGKTTVLEQLIPLLKQKVAQEILTTREPGGVAISEYIRELILDINHTTMDPKTELLLYIAARRQHLVEKVLPALEAGQLVFIDRFIDSSVAYQGAGRGLIKADIQWLNEFATDGLEPDLTLYFDVPSEIGLARINANQQREVNRLDLETIEIHQRVRKGYLALAKEHPKRIVTIDATKPLKEVVSVALEHVLTLLLA</sequence>
<protein>
    <recommendedName>
        <fullName evidence="1">Thymidylate kinase</fullName>
        <ecNumber evidence="1">2.7.4.9</ecNumber>
    </recommendedName>
    <alternativeName>
        <fullName evidence="1">dTMP kinase</fullName>
    </alternativeName>
</protein>
<accession>P0DC03</accession>
<accession>Q8K8H4</accession>
<evidence type="ECO:0000255" key="1">
    <source>
        <dbReference type="HAMAP-Rule" id="MF_00165"/>
    </source>
</evidence>
<evidence type="ECO:0000305" key="2"/>
<keyword id="KW-0067">ATP-binding</keyword>
<keyword id="KW-0418">Kinase</keyword>
<keyword id="KW-0545">Nucleotide biosynthesis</keyword>
<keyword id="KW-0547">Nucleotide-binding</keyword>
<keyword id="KW-0808">Transferase</keyword>
<reference key="1">
    <citation type="journal article" date="2003" name="Genome Res.">
        <title>Genome sequence of an M3 strain of Streptococcus pyogenes reveals a large-scale genomic rearrangement in invasive strains and new insights into phage evolution.</title>
        <authorList>
            <person name="Nakagawa I."/>
            <person name="Kurokawa K."/>
            <person name="Yamashita A."/>
            <person name="Nakata M."/>
            <person name="Tomiyasu Y."/>
            <person name="Okahashi N."/>
            <person name="Kawabata S."/>
            <person name="Yamazaki K."/>
            <person name="Shiba T."/>
            <person name="Yasunaga T."/>
            <person name="Hayashi H."/>
            <person name="Hattori M."/>
            <person name="Hamada S."/>
        </authorList>
    </citation>
    <scope>NUCLEOTIDE SEQUENCE [LARGE SCALE GENOMIC DNA]</scope>
    <source>
        <strain>SSI-1</strain>
    </source>
</reference>
<gene>
    <name evidence="1" type="primary">tmk</name>
    <name type="ordered locus">SPs1570</name>
</gene>
<dbReference type="EC" id="2.7.4.9" evidence="1"/>
<dbReference type="EMBL" id="BA000034">
    <property type="protein sequence ID" value="BAC64665.1"/>
    <property type="status" value="ALT_INIT"/>
    <property type="molecule type" value="Genomic_DNA"/>
</dbReference>
<dbReference type="RefSeq" id="WP_011054219.1">
    <property type="nucleotide sequence ID" value="NC_004606.1"/>
</dbReference>
<dbReference type="SMR" id="P0DC03"/>
<dbReference type="KEGG" id="sps:SPs1570"/>
<dbReference type="HOGENOM" id="CLU_049131_0_2_9"/>
<dbReference type="GO" id="GO:0005829">
    <property type="term" value="C:cytosol"/>
    <property type="evidence" value="ECO:0007669"/>
    <property type="project" value="TreeGrafter"/>
</dbReference>
<dbReference type="GO" id="GO:0005524">
    <property type="term" value="F:ATP binding"/>
    <property type="evidence" value="ECO:0007669"/>
    <property type="project" value="UniProtKB-UniRule"/>
</dbReference>
<dbReference type="GO" id="GO:0004798">
    <property type="term" value="F:dTMP kinase activity"/>
    <property type="evidence" value="ECO:0007669"/>
    <property type="project" value="UniProtKB-UniRule"/>
</dbReference>
<dbReference type="GO" id="GO:0006233">
    <property type="term" value="P:dTDP biosynthetic process"/>
    <property type="evidence" value="ECO:0007669"/>
    <property type="project" value="InterPro"/>
</dbReference>
<dbReference type="GO" id="GO:0006235">
    <property type="term" value="P:dTTP biosynthetic process"/>
    <property type="evidence" value="ECO:0007669"/>
    <property type="project" value="UniProtKB-UniRule"/>
</dbReference>
<dbReference type="GO" id="GO:0006227">
    <property type="term" value="P:dUDP biosynthetic process"/>
    <property type="evidence" value="ECO:0007669"/>
    <property type="project" value="TreeGrafter"/>
</dbReference>
<dbReference type="CDD" id="cd01672">
    <property type="entry name" value="TMPK"/>
    <property type="match status" value="1"/>
</dbReference>
<dbReference type="FunFam" id="3.40.50.300:FF:000225">
    <property type="entry name" value="Thymidylate kinase"/>
    <property type="match status" value="1"/>
</dbReference>
<dbReference type="Gene3D" id="3.40.50.300">
    <property type="entry name" value="P-loop containing nucleotide triphosphate hydrolases"/>
    <property type="match status" value="1"/>
</dbReference>
<dbReference type="HAMAP" id="MF_00165">
    <property type="entry name" value="Thymidylate_kinase"/>
    <property type="match status" value="1"/>
</dbReference>
<dbReference type="InterPro" id="IPR027417">
    <property type="entry name" value="P-loop_NTPase"/>
</dbReference>
<dbReference type="InterPro" id="IPR039430">
    <property type="entry name" value="Thymidylate_kin-like_dom"/>
</dbReference>
<dbReference type="InterPro" id="IPR018094">
    <property type="entry name" value="Thymidylate_kinase"/>
</dbReference>
<dbReference type="NCBIfam" id="TIGR00041">
    <property type="entry name" value="DTMP_kinase"/>
    <property type="match status" value="1"/>
</dbReference>
<dbReference type="PANTHER" id="PTHR10344">
    <property type="entry name" value="THYMIDYLATE KINASE"/>
    <property type="match status" value="1"/>
</dbReference>
<dbReference type="PANTHER" id="PTHR10344:SF4">
    <property type="entry name" value="UMP-CMP KINASE 2, MITOCHONDRIAL"/>
    <property type="match status" value="1"/>
</dbReference>
<dbReference type="Pfam" id="PF02223">
    <property type="entry name" value="Thymidylate_kin"/>
    <property type="match status" value="1"/>
</dbReference>
<dbReference type="SUPFAM" id="SSF52540">
    <property type="entry name" value="P-loop containing nucleoside triphosphate hydrolases"/>
    <property type="match status" value="1"/>
</dbReference>
<comment type="function">
    <text evidence="1">Phosphorylation of dTMP to form dTDP in both de novo and salvage pathways of dTTP synthesis.</text>
</comment>
<comment type="catalytic activity">
    <reaction evidence="1">
        <text>dTMP + ATP = dTDP + ADP</text>
        <dbReference type="Rhea" id="RHEA:13517"/>
        <dbReference type="ChEBI" id="CHEBI:30616"/>
        <dbReference type="ChEBI" id="CHEBI:58369"/>
        <dbReference type="ChEBI" id="CHEBI:63528"/>
        <dbReference type="ChEBI" id="CHEBI:456216"/>
        <dbReference type="EC" id="2.7.4.9"/>
    </reaction>
</comment>
<comment type="similarity">
    <text evidence="1">Belongs to the thymidylate kinase family.</text>
</comment>
<comment type="sequence caution" evidence="2">
    <conflict type="erroneous initiation">
        <sequence resource="EMBL-CDS" id="BAC64665"/>
    </conflict>
</comment>
<organism>
    <name type="scientific">Streptococcus pyogenes serotype M3 (strain SSI-1)</name>
    <dbReference type="NCBI Taxonomy" id="193567"/>
    <lineage>
        <taxon>Bacteria</taxon>
        <taxon>Bacillati</taxon>
        <taxon>Bacillota</taxon>
        <taxon>Bacilli</taxon>
        <taxon>Lactobacillales</taxon>
        <taxon>Streptococcaceae</taxon>
        <taxon>Streptococcus</taxon>
    </lineage>
</organism>
<proteinExistence type="inferred from homology"/>